<gene>
    <name evidence="2" type="primary">emsy</name>
    <name type="ORF">zgc:56039</name>
</gene>
<comment type="function">
    <text evidence="1">Regulator which is able to repress transcription, possibly via its interaction with a multiprotein chromatin remodeling complex that modifies the chromatin.</text>
</comment>
<comment type="subunit">
    <text evidence="1">Homodimer.</text>
</comment>
<comment type="subcellular location">
    <subcellularLocation>
        <location evidence="1">Nucleus</location>
    </subcellularLocation>
</comment>
<feature type="chain" id="PRO_0000086967" description="BRCA2-interacting transcriptional repressor EMSY">
    <location>
        <begin position="1"/>
        <end position="1173"/>
    </location>
</feature>
<feature type="domain" description="ENT" evidence="3">
    <location>
        <begin position="16"/>
        <end position="100"/>
    </location>
</feature>
<feature type="region of interest" description="Disordered" evidence="4">
    <location>
        <begin position="149"/>
        <end position="179"/>
    </location>
</feature>
<feature type="region of interest" description="Disordered" evidence="4">
    <location>
        <begin position="191"/>
        <end position="216"/>
    </location>
</feature>
<feature type="region of interest" description="Disordered" evidence="4">
    <location>
        <begin position="676"/>
        <end position="720"/>
    </location>
</feature>
<feature type="region of interest" description="Disordered" evidence="4">
    <location>
        <begin position="797"/>
        <end position="816"/>
    </location>
</feature>
<feature type="region of interest" description="Disordered" evidence="4">
    <location>
        <begin position="905"/>
        <end position="998"/>
    </location>
</feature>
<feature type="region of interest" description="Disordered" evidence="4">
    <location>
        <begin position="1020"/>
        <end position="1046"/>
    </location>
</feature>
<feature type="region of interest" description="Disordered" evidence="4">
    <location>
        <begin position="1139"/>
        <end position="1173"/>
    </location>
</feature>
<feature type="compositionally biased region" description="Low complexity" evidence="4">
    <location>
        <begin position="149"/>
        <end position="177"/>
    </location>
</feature>
<feature type="compositionally biased region" description="Low complexity" evidence="4">
    <location>
        <begin position="683"/>
        <end position="693"/>
    </location>
</feature>
<feature type="compositionally biased region" description="Low complexity" evidence="4">
    <location>
        <begin position="911"/>
        <end position="921"/>
    </location>
</feature>
<feature type="compositionally biased region" description="Low complexity" evidence="4">
    <location>
        <begin position="937"/>
        <end position="953"/>
    </location>
</feature>
<feature type="compositionally biased region" description="Polar residues" evidence="4">
    <location>
        <begin position="961"/>
        <end position="976"/>
    </location>
</feature>
<feature type="compositionally biased region" description="Polar residues" evidence="4">
    <location>
        <begin position="989"/>
        <end position="998"/>
    </location>
</feature>
<feature type="compositionally biased region" description="Low complexity" evidence="4">
    <location>
        <begin position="1025"/>
        <end position="1040"/>
    </location>
</feature>
<feature type="compositionally biased region" description="Acidic residues" evidence="4">
    <location>
        <begin position="1148"/>
        <end position="1159"/>
    </location>
</feature>
<reference key="1">
    <citation type="submission" date="2003-03" db="EMBL/GenBank/DDBJ databases">
        <authorList>
            <consortium name="NIH - Zebrafish Gene Collection (ZGC) project"/>
        </authorList>
    </citation>
    <scope>NUCLEOTIDE SEQUENCE [LARGE SCALE MRNA]</scope>
    <source>
        <strain>AB</strain>
    </source>
</reference>
<evidence type="ECO:0000250" key="1"/>
<evidence type="ECO:0000250" key="2">
    <source>
        <dbReference type="UniProtKB" id="Q7Z589"/>
    </source>
</evidence>
<evidence type="ECO:0000255" key="3">
    <source>
        <dbReference type="PROSITE-ProRule" id="PRU00476"/>
    </source>
</evidence>
<evidence type="ECO:0000256" key="4">
    <source>
        <dbReference type="SAM" id="MobiDB-lite"/>
    </source>
</evidence>
<accession>Q7ZUV7</accession>
<organism>
    <name type="scientific">Danio rerio</name>
    <name type="common">Zebrafish</name>
    <name type="synonym">Brachydanio rerio</name>
    <dbReference type="NCBI Taxonomy" id="7955"/>
    <lineage>
        <taxon>Eukaryota</taxon>
        <taxon>Metazoa</taxon>
        <taxon>Chordata</taxon>
        <taxon>Craniata</taxon>
        <taxon>Vertebrata</taxon>
        <taxon>Euteleostomi</taxon>
        <taxon>Actinopterygii</taxon>
        <taxon>Neopterygii</taxon>
        <taxon>Teleostei</taxon>
        <taxon>Ostariophysi</taxon>
        <taxon>Cypriniformes</taxon>
        <taxon>Danionidae</taxon>
        <taxon>Danioninae</taxon>
        <taxon>Danio</taxon>
    </lineage>
</organism>
<sequence>MPVVWPTLLDLSRDECKRILRKLELEAYAGVISALRAQGDLTKDKKELLGELTRVLSISTERHRAEVRRAVNDERLTTIAHHMSGPNSSSEWSIEGRRLVPLMPRLVPQTAFTVMANAVANATAHQNASLPLPAETANKEVVVCYSYTSTTSTPPSASAPSSSSAAVKSPRPASPASNVVVLPSGSTVYVKSVSCSDEDEKPRKRRRTSSSSSSPVLLKEVPKVAVTAPGPKTITLPVSGGPKISNLMQSIANSLPPHMSPVKITFTKPSTQTTNTTTQKVIIVTTSPSSNFVPNILSKSHNYAAVSKLVSSAALTASSQKQTMVISAGGSSVAPGPGPVAVTTVVSSTPSVVMSTVAQAGSAAVKVASTRLPSPKALIGSPSQILQIPKAQQAVLQSAAPKALQGSISTAQSTALAAAGPGAKPTIQIKQESGVKIITQQMQPSKILPKPSSAALPSSSSAPIMVVSSNGAIMTTKLVSTPTGSASTYTRPTVSPMGTRVATSPAGATYVKTTSGSIITVVPKALATLGGKIITTSMVSGTTTKITTIPMTSKPNVIVVQKTTGKGTTIQGLPGKNVVTTLLNAGGEKTLQAIPGAKPAIITASRPITKMIVTQPKSLGAGVQPSTTTKIIPTKIVYGQQGKTQVLIKPKPMAFQTAVVSEQTRQLVSETLQQVNRSAENNTTSTHTSAAAAGLENRDDTHTYTEGSPVPSDSTHDAPPVVHLISSRGQEWAEQEVSVESSPALIYQELTAESQSATSTIKALLELQQTSVKEKSEAKPRQHTIDLSQMAVPIPVSAEQRESPEPSGQSAAESDAHTEFIPIGKVSKAAEVSASSTPGQSASAVSAAPHVVKISTAAVTTQQVEAQVKPQQEQVLVEECELEGDTLDPQTGLFYRSSPQQQLSRVCEAASSSSSSSSSSSRRAEPPLTVKILTHRSSSSAPATAASANTPHTPQLPRLQQAPTTHNRPNTHTQLSQPPPLQAHHPVGSSKTSSGAQVQQPIITQGATVTKITFGAPHVPRAPVSSSSSSEAALKLQAESSSEKPSVPDILKISMMEAEIDPGAEPMLVDSSSDCGPLTKAPAGPSLISSSKQTLAHGPFSRKSKELDIIQVIPQYSIMPDSSQSNVVVEPSGFLEISDYTSQRLDEEQAMEQEVDSSNDEGAAASPSADQSQ</sequence>
<name>EMSY_DANRE</name>
<proteinExistence type="evidence at transcript level"/>
<keyword id="KW-0156">Chromatin regulator</keyword>
<keyword id="KW-0227">DNA damage</keyword>
<keyword id="KW-0234">DNA repair</keyword>
<keyword id="KW-0539">Nucleus</keyword>
<keyword id="KW-1185">Reference proteome</keyword>
<keyword id="KW-0678">Repressor</keyword>
<keyword id="KW-0804">Transcription</keyword>
<keyword id="KW-0805">Transcription regulation</keyword>
<protein>
    <recommendedName>
        <fullName evidence="2">BRCA2-interacting transcriptional repressor EMSY</fullName>
    </recommendedName>
</protein>
<dbReference type="EMBL" id="BC047813">
    <property type="protein sequence ID" value="AAH47813.1"/>
    <property type="molecule type" value="mRNA"/>
</dbReference>
<dbReference type="RefSeq" id="NP_956278.1">
    <property type="nucleotide sequence ID" value="NM_199984.1"/>
</dbReference>
<dbReference type="SMR" id="Q7ZUV7"/>
<dbReference type="FunCoup" id="Q7ZUV7">
    <property type="interactions" value="1523"/>
</dbReference>
<dbReference type="STRING" id="7955.ENSDARP00000138672"/>
<dbReference type="PaxDb" id="7955-ENSDARP00000092435"/>
<dbReference type="GeneID" id="335889"/>
<dbReference type="KEGG" id="dre:335889"/>
<dbReference type="AGR" id="ZFIN:ZDB-GENE-030131-7832"/>
<dbReference type="CTD" id="56946"/>
<dbReference type="ZFIN" id="ZDB-GENE-030131-7832">
    <property type="gene designation" value="emsy"/>
</dbReference>
<dbReference type="eggNOG" id="KOG4675">
    <property type="taxonomic scope" value="Eukaryota"/>
</dbReference>
<dbReference type="InParanoid" id="Q7ZUV7"/>
<dbReference type="OrthoDB" id="10035579at2759"/>
<dbReference type="PhylomeDB" id="Q7ZUV7"/>
<dbReference type="PRO" id="PR:Q7ZUV7"/>
<dbReference type="Proteomes" id="UP000000437">
    <property type="component" value="Chromosome 10"/>
</dbReference>
<dbReference type="GO" id="GO:0005654">
    <property type="term" value="C:nucleoplasm"/>
    <property type="evidence" value="ECO:0000318"/>
    <property type="project" value="GO_Central"/>
</dbReference>
<dbReference type="GO" id="GO:0006325">
    <property type="term" value="P:chromatin organization"/>
    <property type="evidence" value="ECO:0007669"/>
    <property type="project" value="UniProtKB-KW"/>
</dbReference>
<dbReference type="GO" id="GO:0006281">
    <property type="term" value="P:DNA repair"/>
    <property type="evidence" value="ECO:0007669"/>
    <property type="project" value="UniProtKB-KW"/>
</dbReference>
<dbReference type="GO" id="GO:0006355">
    <property type="term" value="P:regulation of DNA-templated transcription"/>
    <property type="evidence" value="ECO:0007669"/>
    <property type="project" value="InterPro"/>
</dbReference>
<dbReference type="FunFam" id="1.10.1240.40:FF:000001">
    <property type="entry name" value="BRCA2-interacting transcriptional repressor EMSY isoform X1"/>
    <property type="match status" value="1"/>
</dbReference>
<dbReference type="Gene3D" id="1.10.1240.40">
    <property type="entry name" value="ENT domain"/>
    <property type="match status" value="1"/>
</dbReference>
<dbReference type="InterPro" id="IPR033482">
    <property type="entry name" value="EMSY"/>
</dbReference>
<dbReference type="InterPro" id="IPR005491">
    <property type="entry name" value="ENT_dom"/>
</dbReference>
<dbReference type="InterPro" id="IPR036142">
    <property type="entry name" value="ENT_dom-like_sf"/>
</dbReference>
<dbReference type="PANTHER" id="PTHR16500">
    <property type="entry name" value="BRCA2-INTERACTING TRANSCRIPTIONAL REPRESSOR EMSY"/>
    <property type="match status" value="1"/>
</dbReference>
<dbReference type="PANTHER" id="PTHR16500:SF3">
    <property type="entry name" value="BRCA2-INTERACTING TRANSCRIPTIONAL REPRESSOR EMSY"/>
    <property type="match status" value="1"/>
</dbReference>
<dbReference type="Pfam" id="PF03735">
    <property type="entry name" value="ENT"/>
    <property type="match status" value="1"/>
</dbReference>
<dbReference type="SMART" id="SM01191">
    <property type="entry name" value="ENT"/>
    <property type="match status" value="1"/>
</dbReference>
<dbReference type="SUPFAM" id="SSF158639">
    <property type="entry name" value="ENT-like"/>
    <property type="match status" value="1"/>
</dbReference>
<dbReference type="PROSITE" id="PS51138">
    <property type="entry name" value="ENT"/>
    <property type="match status" value="1"/>
</dbReference>